<gene>
    <name type="primary">HMF1</name>
    <name type="synonym">HIG1</name>
    <name type="ordered locus">YER057C</name>
</gene>
<protein>
    <recommendedName>
        <fullName>Protein HMF1</fullName>
    </recommendedName>
    <alternativeName>
        <fullName>High dosage growth inhibitor</fullName>
    </alternativeName>
    <alternativeName>
        <fullName>Homologous mitochondrial matrix factor 1</fullName>
    </alternativeName>
</protein>
<organism>
    <name type="scientific">Saccharomyces cerevisiae (strain ATCC 204508 / S288c)</name>
    <name type="common">Baker's yeast</name>
    <dbReference type="NCBI Taxonomy" id="559292"/>
    <lineage>
        <taxon>Eukaryota</taxon>
        <taxon>Fungi</taxon>
        <taxon>Dikarya</taxon>
        <taxon>Ascomycota</taxon>
        <taxon>Saccharomycotina</taxon>
        <taxon>Saccharomycetes</taxon>
        <taxon>Saccharomycetales</taxon>
        <taxon>Saccharomycetaceae</taxon>
        <taxon>Saccharomyces</taxon>
    </lineage>
</organism>
<comment type="subcellular location">
    <subcellularLocation>
        <location>Cytoplasm</location>
    </subcellularLocation>
    <subcellularLocation>
        <location>Nucleus</location>
    </subcellularLocation>
    <subcellularLocation>
        <location evidence="2">Mitochondrion intermembrane space</location>
    </subcellularLocation>
</comment>
<comment type="miscellaneous">
    <text evidence="1">Present with 672 molecules/cell in log phase SD medium.</text>
</comment>
<comment type="similarity">
    <text evidence="3">Belongs to the RutC family.</text>
</comment>
<name>HMF1_YEAST</name>
<feature type="chain" id="PRO_0000170312" description="Protein HMF1">
    <location>
        <begin position="1"/>
        <end position="129"/>
    </location>
</feature>
<feature type="cross-link" description="Glycyl lysine isopeptide (Lys-Gly) (interchain with G-Cter in ubiquitin)" evidence="4">
    <location>
        <position position="52"/>
    </location>
</feature>
<feature type="strand" evidence="5">
    <location>
        <begin position="5"/>
        <end position="8"/>
    </location>
</feature>
<feature type="strand" evidence="5">
    <location>
        <begin position="17"/>
        <end position="19"/>
    </location>
</feature>
<feature type="strand" evidence="5">
    <location>
        <begin position="22"/>
        <end position="26"/>
    </location>
</feature>
<feature type="strand" evidence="5">
    <location>
        <begin position="29"/>
        <end position="35"/>
    </location>
</feature>
<feature type="helix" evidence="5">
    <location>
        <begin position="49"/>
        <end position="66"/>
    </location>
</feature>
<feature type="helix" evidence="5">
    <location>
        <begin position="71"/>
        <end position="73"/>
    </location>
</feature>
<feature type="strand" evidence="5">
    <location>
        <begin position="74"/>
        <end position="82"/>
    </location>
</feature>
<feature type="helix" evidence="5">
    <location>
        <begin position="84"/>
        <end position="86"/>
    </location>
</feature>
<feature type="helix" evidence="5">
    <location>
        <begin position="87"/>
        <end position="97"/>
    </location>
</feature>
<feature type="strand" evidence="5">
    <location>
        <begin position="98"/>
        <end position="101"/>
    </location>
</feature>
<feature type="strand" evidence="5">
    <location>
        <begin position="104"/>
        <end position="109"/>
    </location>
</feature>
<feature type="helix" evidence="5">
    <location>
        <begin position="114"/>
        <end position="116"/>
    </location>
</feature>
<feature type="strand" evidence="5">
    <location>
        <begin position="118"/>
        <end position="126"/>
    </location>
</feature>
<accession>P40037</accession>
<accession>D3DLW1</accession>
<keyword id="KW-0002">3D-structure</keyword>
<keyword id="KW-0963">Cytoplasm</keyword>
<keyword id="KW-1017">Isopeptide bond</keyword>
<keyword id="KW-0496">Mitochondrion</keyword>
<keyword id="KW-0539">Nucleus</keyword>
<keyword id="KW-1185">Reference proteome</keyword>
<keyword id="KW-0832">Ubl conjugation</keyword>
<sequence>MVTTLTPVICESAPAAAASYSHAMKVNNLIFLSGQIPVTPDNKLVEGSIADKAEQVIQNIKNVLEASNSSLDRVVKVNIFLADINHFAEFNSVYAKYFNTHKPARSCVAVAALPLGVDMEMEAIAAERD</sequence>
<evidence type="ECO:0000269" key="1">
    <source>
    </source>
</evidence>
<evidence type="ECO:0000269" key="2">
    <source>
    </source>
</evidence>
<evidence type="ECO:0000305" key="3"/>
<evidence type="ECO:0007744" key="4">
    <source>
    </source>
</evidence>
<evidence type="ECO:0007829" key="5">
    <source>
        <dbReference type="PDB" id="1JD1"/>
    </source>
</evidence>
<proteinExistence type="evidence at protein level"/>
<reference key="1">
    <citation type="journal article" date="2001" name="Genes Cells">
        <title>A member of the YER057c/yjgf/Uk114 family links isoleucine biosynthesis and intact mitochondria maintenance in Saccharomyces cerevisiae.</title>
        <authorList>
            <person name="Kim J.-M."/>
            <person name="Yoshikawa H."/>
            <person name="Shirahige K."/>
        </authorList>
    </citation>
    <scope>NUCLEOTIDE SEQUENCE [GENOMIC DNA]</scope>
    <scope>SUBCELLULAR LOCATION</scope>
</reference>
<reference key="2">
    <citation type="journal article" date="1997" name="Nature">
        <title>The nucleotide sequence of Saccharomyces cerevisiae chromosome V.</title>
        <authorList>
            <person name="Dietrich F.S."/>
            <person name="Mulligan J.T."/>
            <person name="Hennessy K.M."/>
            <person name="Yelton M.A."/>
            <person name="Allen E."/>
            <person name="Araujo R."/>
            <person name="Aviles E."/>
            <person name="Berno A."/>
            <person name="Brennan T."/>
            <person name="Carpenter J."/>
            <person name="Chen E."/>
            <person name="Cherry J.M."/>
            <person name="Chung E."/>
            <person name="Duncan M."/>
            <person name="Guzman E."/>
            <person name="Hartzell G."/>
            <person name="Hunicke-Smith S."/>
            <person name="Hyman R.W."/>
            <person name="Kayser A."/>
            <person name="Komp C."/>
            <person name="Lashkari D."/>
            <person name="Lew H."/>
            <person name="Lin D."/>
            <person name="Mosedale D."/>
            <person name="Nakahara K."/>
            <person name="Namath A."/>
            <person name="Norgren R."/>
            <person name="Oefner P."/>
            <person name="Oh C."/>
            <person name="Petel F.X."/>
            <person name="Roberts D."/>
            <person name="Sehl P."/>
            <person name="Schramm S."/>
            <person name="Shogren T."/>
            <person name="Smith V."/>
            <person name="Taylor P."/>
            <person name="Wei Y."/>
            <person name="Botstein D."/>
            <person name="Davis R.W."/>
        </authorList>
    </citation>
    <scope>NUCLEOTIDE SEQUENCE [LARGE SCALE GENOMIC DNA]</scope>
    <source>
        <strain>ATCC 204508 / S288c</strain>
    </source>
</reference>
<reference key="3">
    <citation type="journal article" date="2014" name="G3 (Bethesda)">
        <title>The reference genome sequence of Saccharomyces cerevisiae: Then and now.</title>
        <authorList>
            <person name="Engel S.R."/>
            <person name="Dietrich F.S."/>
            <person name="Fisk D.G."/>
            <person name="Binkley G."/>
            <person name="Balakrishnan R."/>
            <person name="Costanzo M.C."/>
            <person name="Dwight S.S."/>
            <person name="Hitz B.C."/>
            <person name="Karra K."/>
            <person name="Nash R.S."/>
            <person name="Weng S."/>
            <person name="Wong E.D."/>
            <person name="Lloyd P."/>
            <person name="Skrzypek M.S."/>
            <person name="Miyasato S.R."/>
            <person name="Simison M."/>
            <person name="Cherry J.M."/>
        </authorList>
    </citation>
    <scope>GENOME REANNOTATION</scope>
    <source>
        <strain>ATCC 204508 / S288c</strain>
    </source>
</reference>
<reference key="4">
    <citation type="journal article" date="2007" name="Genome Res.">
        <title>Approaching a complete repository of sequence-verified protein-encoding clones for Saccharomyces cerevisiae.</title>
        <authorList>
            <person name="Hu Y."/>
            <person name="Rolfs A."/>
            <person name="Bhullar B."/>
            <person name="Murthy T.V.S."/>
            <person name="Zhu C."/>
            <person name="Berger M.F."/>
            <person name="Camargo A.A."/>
            <person name="Kelley F."/>
            <person name="McCarron S."/>
            <person name="Jepson D."/>
            <person name="Richardson A."/>
            <person name="Raphael J."/>
            <person name="Moreira D."/>
            <person name="Taycher E."/>
            <person name="Zuo D."/>
            <person name="Mohr S."/>
            <person name="Kane M.F."/>
            <person name="Williamson J."/>
            <person name="Simpson A.J.G."/>
            <person name="Bulyk M.L."/>
            <person name="Harlow E."/>
            <person name="Marsischky G."/>
            <person name="Kolodner R.D."/>
            <person name="LaBaer J."/>
        </authorList>
    </citation>
    <scope>NUCLEOTIDE SEQUENCE [GENOMIC DNA]</scope>
    <source>
        <strain>ATCC 204508 / S288c</strain>
    </source>
</reference>
<reference key="5">
    <citation type="journal article" date="2000" name="Mol. Cell. Biol.">
        <title>Mmf1p, a novel yeast mitochondrial protein conserved throughout evolution and involved in maintenance of the mitochondrial genome.</title>
        <authorList>
            <person name="Oxelmark E."/>
            <person name="Marchini A."/>
            <person name="Malanchi I."/>
            <person name="Magherini F."/>
            <person name="Jaquet L."/>
            <person name="Hajibagheri M.A."/>
            <person name="Blight K.J."/>
            <person name="Jauniaux J.-C."/>
            <person name="Tommasino M."/>
        </authorList>
    </citation>
    <scope>SUBCELLULAR LOCATION</scope>
</reference>
<reference key="6">
    <citation type="journal article" date="2003" name="Nature">
        <title>Global analysis of protein expression in yeast.</title>
        <authorList>
            <person name="Ghaemmaghami S."/>
            <person name="Huh W.-K."/>
            <person name="Bower K."/>
            <person name="Howson R.W."/>
            <person name="Belle A."/>
            <person name="Dephoure N."/>
            <person name="O'Shea E.K."/>
            <person name="Weissman J.S."/>
        </authorList>
    </citation>
    <scope>LEVEL OF PROTEIN EXPRESSION [LARGE SCALE ANALYSIS]</scope>
</reference>
<reference key="7">
    <citation type="journal article" date="2012" name="Mol. Cell. Proteomics">
        <title>Intermembrane space proteome of yeast mitochondria.</title>
        <authorList>
            <person name="Voegtle F.N."/>
            <person name="Burkhart J.M."/>
            <person name="Rao S."/>
            <person name="Gerbeth C."/>
            <person name="Hinrichs J."/>
            <person name="Martinou J.C."/>
            <person name="Chacinska A."/>
            <person name="Sickmann A."/>
            <person name="Zahedi R.P."/>
            <person name="Meisinger C."/>
        </authorList>
    </citation>
    <scope>IDENTIFICATION BY MASS SPECTROMETRY</scope>
    <scope>SUBCELLULAR LOCATION [LARGE SCALE ANALYSIS]</scope>
</reference>
<reference key="8">
    <citation type="journal article" date="2012" name="Proteomics">
        <title>Sites of ubiquitin attachment in Saccharomyces cerevisiae.</title>
        <authorList>
            <person name="Starita L.M."/>
            <person name="Lo R.S."/>
            <person name="Eng J.K."/>
            <person name="von Haller P.D."/>
            <person name="Fields S."/>
        </authorList>
    </citation>
    <scope>UBIQUITINATION [LARGE SCALE ANALYSIS] AT LYS-52</scope>
    <scope>IDENTIFICATION BY MASS SPECTROMETRY [LARGE SCALE ANALYSIS]</scope>
</reference>
<reference key="9">
    <citation type="journal article" date="2002" name="Proteins">
        <title>X-ray structure of Saccharomyces cerevisiae homologous mitochondrial matrix factor 1 (Hmf1).</title>
        <authorList>
            <person name="Deaconescu A.M."/>
            <person name="Roll-Mecak A."/>
            <person name="Bonanno J.B."/>
            <person name="Gerchman S.E."/>
            <person name="Kycia H."/>
            <person name="Studier F.W."/>
            <person name="Burley S.K."/>
        </authorList>
    </citation>
    <scope>X-RAY CRYSTALLOGRAPHY (1.7 ANGSTROMS)</scope>
</reference>
<dbReference type="EMBL" id="AB050475">
    <property type="protein sequence ID" value="BAB20815.1"/>
    <property type="molecule type" value="Genomic_DNA"/>
</dbReference>
<dbReference type="EMBL" id="U18813">
    <property type="protein sequence ID" value="AAB64593.1"/>
    <property type="molecule type" value="Genomic_DNA"/>
</dbReference>
<dbReference type="EMBL" id="AY558456">
    <property type="protein sequence ID" value="AAS56782.1"/>
    <property type="molecule type" value="Genomic_DNA"/>
</dbReference>
<dbReference type="EMBL" id="BK006939">
    <property type="protein sequence ID" value="DAA07715.1"/>
    <property type="molecule type" value="Genomic_DNA"/>
</dbReference>
<dbReference type="PIR" id="S50560">
    <property type="entry name" value="S50560"/>
</dbReference>
<dbReference type="RefSeq" id="NP_010978.3">
    <property type="nucleotide sequence ID" value="NM_001178948.3"/>
</dbReference>
<dbReference type="PDB" id="1JD1">
    <property type="method" value="X-ray"/>
    <property type="resolution" value="1.70 A"/>
    <property type="chains" value="A/B/C/D/E/F=1-129"/>
</dbReference>
<dbReference type="PDBsum" id="1JD1"/>
<dbReference type="SMR" id="P40037"/>
<dbReference type="BioGRID" id="36798">
    <property type="interactions" value="52"/>
</dbReference>
<dbReference type="DIP" id="DIP-4314N"/>
<dbReference type="FunCoup" id="P40037">
    <property type="interactions" value="516"/>
</dbReference>
<dbReference type="IntAct" id="P40037">
    <property type="interactions" value="8"/>
</dbReference>
<dbReference type="MINT" id="P40037"/>
<dbReference type="STRING" id="4932.YER057C"/>
<dbReference type="iPTMnet" id="P40037"/>
<dbReference type="PaxDb" id="4932-YER057C"/>
<dbReference type="PeptideAtlas" id="P40037"/>
<dbReference type="TopDownProteomics" id="P40037"/>
<dbReference type="EnsemblFungi" id="YER057C_mRNA">
    <property type="protein sequence ID" value="YER057C"/>
    <property type="gene ID" value="YER057C"/>
</dbReference>
<dbReference type="GeneID" id="856785"/>
<dbReference type="KEGG" id="sce:YER057C"/>
<dbReference type="AGR" id="SGD:S000000859"/>
<dbReference type="SGD" id="S000000859">
    <property type="gene designation" value="HMF1"/>
</dbReference>
<dbReference type="VEuPathDB" id="FungiDB:YER057C"/>
<dbReference type="eggNOG" id="KOG2317">
    <property type="taxonomic scope" value="Eukaryota"/>
</dbReference>
<dbReference type="GeneTree" id="ENSGT00420000029792"/>
<dbReference type="HOGENOM" id="CLU_100715_7_2_1"/>
<dbReference type="InParanoid" id="P40037"/>
<dbReference type="OMA" id="CKSTVWL"/>
<dbReference type="OrthoDB" id="309640at2759"/>
<dbReference type="BioCyc" id="YEAST:G3O-30234-MONOMER"/>
<dbReference type="BioGRID-ORCS" id="856785">
    <property type="hits" value="0 hits in 10 CRISPR screens"/>
</dbReference>
<dbReference type="EvolutionaryTrace" id="P40037"/>
<dbReference type="PRO" id="PR:P40037"/>
<dbReference type="Proteomes" id="UP000002311">
    <property type="component" value="Chromosome V"/>
</dbReference>
<dbReference type="RNAct" id="P40037">
    <property type="molecule type" value="protein"/>
</dbReference>
<dbReference type="GO" id="GO:0005737">
    <property type="term" value="C:cytoplasm"/>
    <property type="evidence" value="ECO:0000314"/>
    <property type="project" value="SGD"/>
</dbReference>
<dbReference type="GO" id="GO:0005829">
    <property type="term" value="C:cytosol"/>
    <property type="evidence" value="ECO:0000314"/>
    <property type="project" value="SGD"/>
</dbReference>
<dbReference type="GO" id="GO:0005758">
    <property type="term" value="C:mitochondrial intermembrane space"/>
    <property type="evidence" value="ECO:0000314"/>
    <property type="project" value="SGD"/>
</dbReference>
<dbReference type="GO" id="GO:0005739">
    <property type="term" value="C:mitochondrion"/>
    <property type="evidence" value="ECO:0000318"/>
    <property type="project" value="GO_Central"/>
</dbReference>
<dbReference type="GO" id="GO:0005634">
    <property type="term" value="C:nucleus"/>
    <property type="evidence" value="ECO:0000314"/>
    <property type="project" value="SGD"/>
</dbReference>
<dbReference type="GO" id="GO:0019239">
    <property type="term" value="F:deaminase activity"/>
    <property type="evidence" value="ECO:0000318"/>
    <property type="project" value="GO_Central"/>
</dbReference>
<dbReference type="CDD" id="cd00448">
    <property type="entry name" value="YjgF_YER057c_UK114_family"/>
    <property type="match status" value="1"/>
</dbReference>
<dbReference type="FunFam" id="3.30.1330.40:FF:000001">
    <property type="entry name" value="L-PSP family endoribonuclease"/>
    <property type="match status" value="1"/>
</dbReference>
<dbReference type="Gene3D" id="3.30.1330.40">
    <property type="entry name" value="RutC-like"/>
    <property type="match status" value="1"/>
</dbReference>
<dbReference type="InterPro" id="IPR006056">
    <property type="entry name" value="RidA"/>
</dbReference>
<dbReference type="InterPro" id="IPR019897">
    <property type="entry name" value="RidA_CS"/>
</dbReference>
<dbReference type="InterPro" id="IPR035959">
    <property type="entry name" value="RutC-like_sf"/>
</dbReference>
<dbReference type="InterPro" id="IPR006175">
    <property type="entry name" value="YjgF/YER057c/UK114"/>
</dbReference>
<dbReference type="NCBIfam" id="TIGR00004">
    <property type="entry name" value="Rid family detoxifying hydrolase"/>
    <property type="match status" value="1"/>
</dbReference>
<dbReference type="PANTHER" id="PTHR11803">
    <property type="entry name" value="2-IMINOBUTANOATE/2-IMINOPROPANOATE DEAMINASE RIDA"/>
    <property type="match status" value="1"/>
</dbReference>
<dbReference type="PANTHER" id="PTHR11803:SF58">
    <property type="entry name" value="PROTEIN HMF1-RELATED"/>
    <property type="match status" value="1"/>
</dbReference>
<dbReference type="Pfam" id="PF01042">
    <property type="entry name" value="Ribonuc_L-PSP"/>
    <property type="match status" value="1"/>
</dbReference>
<dbReference type="SUPFAM" id="SSF55298">
    <property type="entry name" value="YjgF-like"/>
    <property type="match status" value="1"/>
</dbReference>
<dbReference type="PROSITE" id="PS01094">
    <property type="entry name" value="UPF0076"/>
    <property type="match status" value="1"/>
</dbReference>